<name>RSMA_SALTI</name>
<keyword id="KW-0963">Cytoplasm</keyword>
<keyword id="KW-0489">Methyltransferase</keyword>
<keyword id="KW-0694">RNA-binding</keyword>
<keyword id="KW-0698">rRNA processing</keyword>
<keyword id="KW-0949">S-adenosyl-L-methionine</keyword>
<keyword id="KW-0808">Transferase</keyword>
<sequence length="273" mass="30516">MNNRVHQGHLARKRFGQNFLNDRFVIDSIVSAINPQKGQAMVEIGPGLAALTEPVGERLDKLTVIELDRDLAARLQTHPFLGPKLTIYQQDAMTMNFGELSAQLGQPLRVFGNLPYNISTPLMFHLFSYTDAIADMHFMLQKEVVNRLVAGPNSKAYGRLSVMAQYYCQVIPVLEVPPSAFTPPPKVDSAVVRLVPHATMPYPVKDIRVLSRITTEAFNQRRKTIRNSLGNLFSVETLTEMGIDPAMRAENISVAQYCQMANYLSENAPLKES</sequence>
<dbReference type="EC" id="2.1.1.182" evidence="1"/>
<dbReference type="EMBL" id="AL513382">
    <property type="protein sequence ID" value="CAD01246.1"/>
    <property type="molecule type" value="Genomic_DNA"/>
</dbReference>
<dbReference type="EMBL" id="AE014613">
    <property type="protein sequence ID" value="AAO67826.1"/>
    <property type="molecule type" value="Genomic_DNA"/>
</dbReference>
<dbReference type="RefSeq" id="NP_454702.1">
    <property type="nucleotide sequence ID" value="NC_003198.1"/>
</dbReference>
<dbReference type="RefSeq" id="WP_001065397.1">
    <property type="nucleotide sequence ID" value="NZ_WSUR01000028.1"/>
</dbReference>
<dbReference type="SMR" id="Q8Z9J7"/>
<dbReference type="STRING" id="220341.gene:17584148"/>
<dbReference type="KEGG" id="stt:t0093"/>
<dbReference type="KEGG" id="sty:STY0105"/>
<dbReference type="PATRIC" id="fig|220341.7.peg.104"/>
<dbReference type="eggNOG" id="COG0030">
    <property type="taxonomic scope" value="Bacteria"/>
</dbReference>
<dbReference type="HOGENOM" id="CLU_041220_0_1_6"/>
<dbReference type="OMA" id="GMFQKEV"/>
<dbReference type="OrthoDB" id="9814755at2"/>
<dbReference type="Proteomes" id="UP000000541">
    <property type="component" value="Chromosome"/>
</dbReference>
<dbReference type="Proteomes" id="UP000002670">
    <property type="component" value="Chromosome"/>
</dbReference>
<dbReference type="GO" id="GO:0005829">
    <property type="term" value="C:cytosol"/>
    <property type="evidence" value="ECO:0007669"/>
    <property type="project" value="TreeGrafter"/>
</dbReference>
<dbReference type="GO" id="GO:0052908">
    <property type="term" value="F:16S rRNA (adenine(1518)-N(6)/adenine(1519)-N(6))-dimethyltransferase activity"/>
    <property type="evidence" value="ECO:0007669"/>
    <property type="project" value="UniProtKB-EC"/>
</dbReference>
<dbReference type="GO" id="GO:0003723">
    <property type="term" value="F:RNA binding"/>
    <property type="evidence" value="ECO:0007669"/>
    <property type="project" value="UniProtKB-KW"/>
</dbReference>
<dbReference type="FunFam" id="1.10.8.100:FF:000001">
    <property type="entry name" value="Ribosomal RNA small subunit methyltransferase A"/>
    <property type="match status" value="1"/>
</dbReference>
<dbReference type="FunFam" id="3.40.50.150:FF:000006">
    <property type="entry name" value="Ribosomal RNA small subunit methyltransferase A"/>
    <property type="match status" value="1"/>
</dbReference>
<dbReference type="Gene3D" id="1.10.8.100">
    <property type="entry name" value="Ribosomal RNA adenine dimethylase-like, domain 2"/>
    <property type="match status" value="1"/>
</dbReference>
<dbReference type="Gene3D" id="3.40.50.150">
    <property type="entry name" value="Vaccinia Virus protein VP39"/>
    <property type="match status" value="1"/>
</dbReference>
<dbReference type="HAMAP" id="MF_00607">
    <property type="entry name" value="16SrRNA_methyltr_A"/>
    <property type="match status" value="1"/>
</dbReference>
<dbReference type="InterPro" id="IPR001737">
    <property type="entry name" value="KsgA/Erm"/>
</dbReference>
<dbReference type="InterPro" id="IPR023165">
    <property type="entry name" value="rRNA_Ade_diMease-like_C"/>
</dbReference>
<dbReference type="InterPro" id="IPR020596">
    <property type="entry name" value="rRNA_Ade_Mease_Trfase_CS"/>
</dbReference>
<dbReference type="InterPro" id="IPR020598">
    <property type="entry name" value="rRNA_Ade_methylase_Trfase_N"/>
</dbReference>
<dbReference type="InterPro" id="IPR011530">
    <property type="entry name" value="rRNA_adenine_dimethylase"/>
</dbReference>
<dbReference type="InterPro" id="IPR029063">
    <property type="entry name" value="SAM-dependent_MTases_sf"/>
</dbReference>
<dbReference type="NCBIfam" id="TIGR00755">
    <property type="entry name" value="ksgA"/>
    <property type="match status" value="1"/>
</dbReference>
<dbReference type="PANTHER" id="PTHR11727">
    <property type="entry name" value="DIMETHYLADENOSINE TRANSFERASE"/>
    <property type="match status" value="1"/>
</dbReference>
<dbReference type="PANTHER" id="PTHR11727:SF7">
    <property type="entry name" value="DIMETHYLADENOSINE TRANSFERASE-RELATED"/>
    <property type="match status" value="1"/>
</dbReference>
<dbReference type="Pfam" id="PF00398">
    <property type="entry name" value="RrnaAD"/>
    <property type="match status" value="1"/>
</dbReference>
<dbReference type="SMART" id="SM00650">
    <property type="entry name" value="rADc"/>
    <property type="match status" value="1"/>
</dbReference>
<dbReference type="SUPFAM" id="SSF53335">
    <property type="entry name" value="S-adenosyl-L-methionine-dependent methyltransferases"/>
    <property type="match status" value="1"/>
</dbReference>
<dbReference type="PROSITE" id="PS01131">
    <property type="entry name" value="RRNA_A_DIMETH"/>
    <property type="match status" value="1"/>
</dbReference>
<dbReference type="PROSITE" id="PS51689">
    <property type="entry name" value="SAM_RNA_A_N6_MT"/>
    <property type="match status" value="1"/>
</dbReference>
<feature type="chain" id="PRO_0000101598" description="Ribosomal RNA small subunit methyltransferase A">
    <location>
        <begin position="1"/>
        <end position="273"/>
    </location>
</feature>
<feature type="binding site" evidence="1">
    <location>
        <position position="18"/>
    </location>
    <ligand>
        <name>S-adenosyl-L-methionine</name>
        <dbReference type="ChEBI" id="CHEBI:59789"/>
    </ligand>
</feature>
<feature type="binding site" evidence="1">
    <location>
        <position position="20"/>
    </location>
    <ligand>
        <name>S-adenosyl-L-methionine</name>
        <dbReference type="ChEBI" id="CHEBI:59789"/>
    </ligand>
</feature>
<feature type="binding site" evidence="1">
    <location>
        <position position="45"/>
    </location>
    <ligand>
        <name>S-adenosyl-L-methionine</name>
        <dbReference type="ChEBI" id="CHEBI:59789"/>
    </ligand>
</feature>
<feature type="binding site" evidence="1">
    <location>
        <position position="66"/>
    </location>
    <ligand>
        <name>S-adenosyl-L-methionine</name>
        <dbReference type="ChEBI" id="CHEBI:59789"/>
    </ligand>
</feature>
<feature type="binding site" evidence="1">
    <location>
        <position position="91"/>
    </location>
    <ligand>
        <name>S-adenosyl-L-methionine</name>
        <dbReference type="ChEBI" id="CHEBI:59789"/>
    </ligand>
</feature>
<feature type="binding site" evidence="1">
    <location>
        <position position="113"/>
    </location>
    <ligand>
        <name>S-adenosyl-L-methionine</name>
        <dbReference type="ChEBI" id="CHEBI:59789"/>
    </ligand>
</feature>
<protein>
    <recommendedName>
        <fullName evidence="1">Ribosomal RNA small subunit methyltransferase A</fullName>
        <ecNumber evidence="1">2.1.1.182</ecNumber>
    </recommendedName>
    <alternativeName>
        <fullName evidence="1">16S rRNA (adenine(1518)-N(6)/adenine(1519)-N(6))-dimethyltransferase</fullName>
    </alternativeName>
    <alternativeName>
        <fullName evidence="1">16S rRNA dimethyladenosine transferase</fullName>
    </alternativeName>
    <alternativeName>
        <fullName evidence="1">16S rRNA dimethylase</fullName>
    </alternativeName>
    <alternativeName>
        <fullName evidence="1">S-adenosylmethionine-6-N', N'-adenosyl(rRNA) dimethyltransferase</fullName>
    </alternativeName>
</protein>
<comment type="function">
    <text evidence="1">Specifically dimethylates two adjacent adenosines (A1518 and A1519) in the loop of a conserved hairpin near the 3'-end of 16S rRNA in the 30S particle. May play a critical role in biogenesis of 30S subunits.</text>
</comment>
<comment type="catalytic activity">
    <reaction evidence="1">
        <text>adenosine(1518)/adenosine(1519) in 16S rRNA + 4 S-adenosyl-L-methionine = N(6)-dimethyladenosine(1518)/N(6)-dimethyladenosine(1519) in 16S rRNA + 4 S-adenosyl-L-homocysteine + 4 H(+)</text>
        <dbReference type="Rhea" id="RHEA:19609"/>
        <dbReference type="Rhea" id="RHEA-COMP:10232"/>
        <dbReference type="Rhea" id="RHEA-COMP:10233"/>
        <dbReference type="ChEBI" id="CHEBI:15378"/>
        <dbReference type="ChEBI" id="CHEBI:57856"/>
        <dbReference type="ChEBI" id="CHEBI:59789"/>
        <dbReference type="ChEBI" id="CHEBI:74411"/>
        <dbReference type="ChEBI" id="CHEBI:74493"/>
        <dbReference type="EC" id="2.1.1.182"/>
    </reaction>
</comment>
<comment type="subcellular location">
    <subcellularLocation>
        <location evidence="1">Cytoplasm</location>
    </subcellularLocation>
</comment>
<comment type="similarity">
    <text evidence="1">Belongs to the class I-like SAM-binding methyltransferase superfamily. rRNA adenine N(6)-methyltransferase family. RsmA subfamily.</text>
</comment>
<gene>
    <name evidence="1" type="primary">rsmA</name>
    <name evidence="1" type="synonym">ksgA</name>
    <name type="ordered locus">STY0105</name>
    <name type="ordered locus">t0093</name>
</gene>
<accession>Q8Z9J7</accession>
<organism>
    <name type="scientific">Salmonella typhi</name>
    <dbReference type="NCBI Taxonomy" id="90370"/>
    <lineage>
        <taxon>Bacteria</taxon>
        <taxon>Pseudomonadati</taxon>
        <taxon>Pseudomonadota</taxon>
        <taxon>Gammaproteobacteria</taxon>
        <taxon>Enterobacterales</taxon>
        <taxon>Enterobacteriaceae</taxon>
        <taxon>Salmonella</taxon>
    </lineage>
</organism>
<proteinExistence type="inferred from homology"/>
<evidence type="ECO:0000255" key="1">
    <source>
        <dbReference type="HAMAP-Rule" id="MF_00607"/>
    </source>
</evidence>
<reference key="1">
    <citation type="journal article" date="2001" name="Nature">
        <title>Complete genome sequence of a multiple drug resistant Salmonella enterica serovar Typhi CT18.</title>
        <authorList>
            <person name="Parkhill J."/>
            <person name="Dougan G."/>
            <person name="James K.D."/>
            <person name="Thomson N.R."/>
            <person name="Pickard D."/>
            <person name="Wain J."/>
            <person name="Churcher C.M."/>
            <person name="Mungall K.L."/>
            <person name="Bentley S.D."/>
            <person name="Holden M.T.G."/>
            <person name="Sebaihia M."/>
            <person name="Baker S."/>
            <person name="Basham D."/>
            <person name="Brooks K."/>
            <person name="Chillingworth T."/>
            <person name="Connerton P."/>
            <person name="Cronin A."/>
            <person name="Davis P."/>
            <person name="Davies R.M."/>
            <person name="Dowd L."/>
            <person name="White N."/>
            <person name="Farrar J."/>
            <person name="Feltwell T."/>
            <person name="Hamlin N."/>
            <person name="Haque A."/>
            <person name="Hien T.T."/>
            <person name="Holroyd S."/>
            <person name="Jagels K."/>
            <person name="Krogh A."/>
            <person name="Larsen T.S."/>
            <person name="Leather S."/>
            <person name="Moule S."/>
            <person name="O'Gaora P."/>
            <person name="Parry C."/>
            <person name="Quail M.A."/>
            <person name="Rutherford K.M."/>
            <person name="Simmonds M."/>
            <person name="Skelton J."/>
            <person name="Stevens K."/>
            <person name="Whitehead S."/>
            <person name="Barrell B.G."/>
        </authorList>
    </citation>
    <scope>NUCLEOTIDE SEQUENCE [LARGE SCALE GENOMIC DNA]</scope>
    <source>
        <strain>CT18</strain>
    </source>
</reference>
<reference key="2">
    <citation type="journal article" date="2003" name="J. Bacteriol.">
        <title>Comparative genomics of Salmonella enterica serovar Typhi strains Ty2 and CT18.</title>
        <authorList>
            <person name="Deng W."/>
            <person name="Liou S.-R."/>
            <person name="Plunkett G. III"/>
            <person name="Mayhew G.F."/>
            <person name="Rose D.J."/>
            <person name="Burland V."/>
            <person name="Kodoyianni V."/>
            <person name="Schwartz D.C."/>
            <person name="Blattner F.R."/>
        </authorList>
    </citation>
    <scope>NUCLEOTIDE SEQUENCE [LARGE SCALE GENOMIC DNA]</scope>
    <source>
        <strain>ATCC 700931 / Ty2</strain>
    </source>
</reference>